<evidence type="ECO:0000255" key="1">
    <source>
        <dbReference type="HAMAP-Rule" id="MF_00366"/>
    </source>
</evidence>
<proteinExistence type="inferred from homology"/>
<feature type="chain" id="PRO_1000005946" description="DNA-directed RNA polymerase subunit omega">
    <location>
        <begin position="1"/>
        <end position="73"/>
    </location>
</feature>
<gene>
    <name evidence="1" type="primary">rpoZ</name>
    <name type="ordered locus">LBUL_1311</name>
</gene>
<protein>
    <recommendedName>
        <fullName evidence="1">DNA-directed RNA polymerase subunit omega</fullName>
        <shortName evidence="1">RNAP omega subunit</shortName>
        <ecNumber evidence="1">2.7.7.6</ecNumber>
    </recommendedName>
    <alternativeName>
        <fullName evidence="1">RNA polymerase omega subunit</fullName>
    </alternativeName>
    <alternativeName>
        <fullName evidence="1">Transcriptase subunit omega</fullName>
    </alternativeName>
</protein>
<reference key="1">
    <citation type="journal article" date="2006" name="Proc. Natl. Acad. Sci. U.S.A.">
        <title>Comparative genomics of the lactic acid bacteria.</title>
        <authorList>
            <person name="Makarova K.S."/>
            <person name="Slesarev A."/>
            <person name="Wolf Y.I."/>
            <person name="Sorokin A."/>
            <person name="Mirkin B."/>
            <person name="Koonin E.V."/>
            <person name="Pavlov A."/>
            <person name="Pavlova N."/>
            <person name="Karamychev V."/>
            <person name="Polouchine N."/>
            <person name="Shakhova V."/>
            <person name="Grigoriev I."/>
            <person name="Lou Y."/>
            <person name="Rohksar D."/>
            <person name="Lucas S."/>
            <person name="Huang K."/>
            <person name="Goodstein D.M."/>
            <person name="Hawkins T."/>
            <person name="Plengvidhya V."/>
            <person name="Welker D."/>
            <person name="Hughes J."/>
            <person name="Goh Y."/>
            <person name="Benson A."/>
            <person name="Baldwin K."/>
            <person name="Lee J.-H."/>
            <person name="Diaz-Muniz I."/>
            <person name="Dosti B."/>
            <person name="Smeianov V."/>
            <person name="Wechter W."/>
            <person name="Barabote R."/>
            <person name="Lorca G."/>
            <person name="Altermann E."/>
            <person name="Barrangou R."/>
            <person name="Ganesan B."/>
            <person name="Xie Y."/>
            <person name="Rawsthorne H."/>
            <person name="Tamir D."/>
            <person name="Parker C."/>
            <person name="Breidt F."/>
            <person name="Broadbent J.R."/>
            <person name="Hutkins R."/>
            <person name="O'Sullivan D."/>
            <person name="Steele J."/>
            <person name="Unlu G."/>
            <person name="Saier M.H. Jr."/>
            <person name="Klaenhammer T."/>
            <person name="Richardson P."/>
            <person name="Kozyavkin S."/>
            <person name="Weimer B.C."/>
            <person name="Mills D.A."/>
        </authorList>
    </citation>
    <scope>NUCLEOTIDE SEQUENCE [LARGE SCALE GENOMIC DNA]</scope>
    <source>
        <strain>ATCC BAA-365 / Lb-18</strain>
    </source>
</reference>
<organism>
    <name type="scientific">Lactobacillus delbrueckii subsp. bulgaricus (strain ATCC BAA-365 / Lb-18)</name>
    <dbReference type="NCBI Taxonomy" id="321956"/>
    <lineage>
        <taxon>Bacteria</taxon>
        <taxon>Bacillati</taxon>
        <taxon>Bacillota</taxon>
        <taxon>Bacilli</taxon>
        <taxon>Lactobacillales</taxon>
        <taxon>Lactobacillaceae</taxon>
        <taxon>Lactobacillus</taxon>
    </lineage>
</organism>
<sequence>MRITYPSIDKLLDEVDSRYSLSVLAAKRAGELEAGKPGALDNYHNLKPVGQALEEIAAGKVTIDADPHGEADE</sequence>
<comment type="function">
    <text evidence="1">Promotes RNA polymerase assembly. Latches the N- and C-terminal regions of the beta' subunit thereby facilitating its interaction with the beta and alpha subunits.</text>
</comment>
<comment type="catalytic activity">
    <reaction evidence="1">
        <text>RNA(n) + a ribonucleoside 5'-triphosphate = RNA(n+1) + diphosphate</text>
        <dbReference type="Rhea" id="RHEA:21248"/>
        <dbReference type="Rhea" id="RHEA-COMP:14527"/>
        <dbReference type="Rhea" id="RHEA-COMP:17342"/>
        <dbReference type="ChEBI" id="CHEBI:33019"/>
        <dbReference type="ChEBI" id="CHEBI:61557"/>
        <dbReference type="ChEBI" id="CHEBI:140395"/>
        <dbReference type="EC" id="2.7.7.6"/>
    </reaction>
</comment>
<comment type="subunit">
    <text evidence="1">The RNAP catalytic core consists of 2 alpha, 1 beta, 1 beta' and 1 omega subunit. When a sigma factor is associated with the core the holoenzyme is formed, which can initiate transcription.</text>
</comment>
<comment type="similarity">
    <text evidence="1">Belongs to the RNA polymerase subunit omega family.</text>
</comment>
<keyword id="KW-0240">DNA-directed RNA polymerase</keyword>
<keyword id="KW-0548">Nucleotidyltransferase</keyword>
<keyword id="KW-0804">Transcription</keyword>
<keyword id="KW-0808">Transferase</keyword>
<accession>Q049N8</accession>
<name>RPOZ_LACDB</name>
<dbReference type="EC" id="2.7.7.6" evidence="1"/>
<dbReference type="EMBL" id="CP000412">
    <property type="protein sequence ID" value="ABJ58834.1"/>
    <property type="molecule type" value="Genomic_DNA"/>
</dbReference>
<dbReference type="RefSeq" id="WP_003612001.1">
    <property type="nucleotide sequence ID" value="NC_008529.1"/>
</dbReference>
<dbReference type="SMR" id="Q049N8"/>
<dbReference type="KEGG" id="lbu:LBUL_1311"/>
<dbReference type="HOGENOM" id="CLU_125406_6_0_9"/>
<dbReference type="BioCyc" id="LDEL321956:LBUL_RS06170-MONOMER"/>
<dbReference type="GO" id="GO:0000428">
    <property type="term" value="C:DNA-directed RNA polymerase complex"/>
    <property type="evidence" value="ECO:0007669"/>
    <property type="project" value="UniProtKB-KW"/>
</dbReference>
<dbReference type="GO" id="GO:0003677">
    <property type="term" value="F:DNA binding"/>
    <property type="evidence" value="ECO:0007669"/>
    <property type="project" value="UniProtKB-UniRule"/>
</dbReference>
<dbReference type="GO" id="GO:0003899">
    <property type="term" value="F:DNA-directed RNA polymerase activity"/>
    <property type="evidence" value="ECO:0007669"/>
    <property type="project" value="UniProtKB-UniRule"/>
</dbReference>
<dbReference type="GO" id="GO:0006351">
    <property type="term" value="P:DNA-templated transcription"/>
    <property type="evidence" value="ECO:0007669"/>
    <property type="project" value="UniProtKB-UniRule"/>
</dbReference>
<dbReference type="Gene3D" id="3.90.940.10">
    <property type="match status" value="1"/>
</dbReference>
<dbReference type="HAMAP" id="MF_00366">
    <property type="entry name" value="RNApol_bact_RpoZ"/>
    <property type="match status" value="1"/>
</dbReference>
<dbReference type="InterPro" id="IPR003716">
    <property type="entry name" value="DNA-dir_RNA_pol_omega"/>
</dbReference>
<dbReference type="InterPro" id="IPR006110">
    <property type="entry name" value="Pol_omega/Rpo6/RPB6"/>
</dbReference>
<dbReference type="InterPro" id="IPR036161">
    <property type="entry name" value="RPB6/omega-like_sf"/>
</dbReference>
<dbReference type="NCBIfam" id="TIGR00690">
    <property type="entry name" value="rpoZ"/>
    <property type="match status" value="1"/>
</dbReference>
<dbReference type="PANTHER" id="PTHR34476">
    <property type="entry name" value="DNA-DIRECTED RNA POLYMERASE SUBUNIT OMEGA"/>
    <property type="match status" value="1"/>
</dbReference>
<dbReference type="PANTHER" id="PTHR34476:SF1">
    <property type="entry name" value="DNA-DIRECTED RNA POLYMERASE SUBUNIT OMEGA"/>
    <property type="match status" value="1"/>
</dbReference>
<dbReference type="Pfam" id="PF01192">
    <property type="entry name" value="RNA_pol_Rpb6"/>
    <property type="match status" value="1"/>
</dbReference>
<dbReference type="SMART" id="SM01409">
    <property type="entry name" value="RNA_pol_Rpb6"/>
    <property type="match status" value="1"/>
</dbReference>
<dbReference type="SUPFAM" id="SSF63562">
    <property type="entry name" value="RPB6/omega subunit-like"/>
    <property type="match status" value="1"/>
</dbReference>